<protein>
    <recommendedName>
        <fullName evidence="11">bZIP transcription factor ABI5 homolog</fullName>
        <shortName evidence="8">OsABI5</shortName>
    </recommendedName>
    <alternativeName>
        <fullName evidence="9">bZIP transcription factor 10</fullName>
        <shortName evidence="9">OsBZIP10</shortName>
    </alternativeName>
</protein>
<proteinExistence type="evidence at protein level"/>
<comment type="function">
    <text evidence="3 4 5 6">Transcription factor that possesses transactivation activity in yeast (PubMed:17604002, PubMed:18236009, PubMed:21055780). Involved in abscisic acid (ABA) signaling pathway. Binds to the G-box motif 5'-CACGTG-3' of TRAB1 gene promoter (PubMed:17604002). Involved in the regulation of pollen maturation. May act as negative regulator of salt stress response (PubMed:18236009). Together with PYL5, PP2C30 and SAPK2, is part of an ABA signaling unit that modulates seed germination and early seedling growth (PubMed:22071266).</text>
</comment>
<comment type="subunit">
    <text evidence="3 5 6 7">Forms homodimers. Interacts with VP1 (PubMed:17604002). Interacts with GF14D (PubMed:21055780). Interacts with PP2C51 (PubMed:28000033). Interacts with SAPK2 (PubMed:22071266, PubMed:28000033).</text>
</comment>
<comment type="subcellular location">
    <subcellularLocation>
        <location evidence="1 4 5 6 7">Nucleus</location>
    </subcellularLocation>
</comment>
<comment type="alternative products">
    <event type="alternative splicing"/>
    <isoform>
        <id>Q8RZ35-1</id>
        <name>1</name>
        <name evidence="8">OsABI5-2</name>
        <sequence type="displayed"/>
    </isoform>
    <isoform>
        <id>Q8RZ35-2</id>
        <name>2</name>
        <name evidence="8">OsABI5-1</name>
        <sequence type="described" ref="VSP_059586"/>
    </isoform>
</comment>
<comment type="tissue specificity">
    <text evidence="3 5">Expressed in roots, leaves and panicles (PubMed:17604002). Expressed in seeds (PubMed:21055780).</text>
</comment>
<comment type="induction">
    <text evidence="4 5 6">Induced by abscisic acid (ABA) (PubMed:18236009, PubMed:21055780, PubMed:22071266). Induced by salt stress. Down-regulated by cold and drought stresses (PubMed:18236009).</text>
</comment>
<comment type="PTM">
    <text evidence="5">Phosphorylated at Ser-44 by SAPK6.</text>
</comment>
<comment type="miscellaneous">
    <text evidence="4">Plants silencing ABI5 exhibit low fertility rate due to abnormal development of mature pollen. Plants silencing ABI5 display increased tolerance to salt stress.</text>
</comment>
<comment type="similarity">
    <text evidence="11">Belongs to the bZIP family. ABI5 subfamily.</text>
</comment>
<comment type="sequence caution" evidence="11">
    <conflict type="erroneous initiation">
        <sequence resource="EMBL-CDS" id="BAF06780"/>
    </conflict>
    <text>Truncated N-terminus.</text>
</comment>
<comment type="sequence caution" evidence="11">
    <conflict type="erroneous initiation">
        <sequence resource="EMBL-CDS" id="BAS75326"/>
    </conflict>
    <text>Truncated N-terminus.</text>
</comment>
<comment type="sequence caution" evidence="11">
    <conflict type="erroneous initiation">
        <sequence resource="EMBL-CDS" id="EEE55706"/>
    </conflict>
    <text>Truncated N-terminus.</text>
</comment>
<name>ABI5_ORYSJ</name>
<gene>
    <name evidence="8" type="primary">ABI5</name>
    <name evidence="9" type="synonym">BZIP10</name>
    <name evidence="10" type="synonym">OREB1</name>
    <name evidence="14" type="ordered locus">Os01g0859300</name>
    <name evidence="11" type="ordered locus">LOC_Os01g64000</name>
    <name evidence="15" type="ORF">OsJ_04142</name>
    <name evidence="12" type="ORF">P0489B03.11</name>
    <name evidence="13" type="ORF">P0679C12.1</name>
</gene>
<organism>
    <name type="scientific">Oryza sativa subsp. japonica</name>
    <name type="common">Rice</name>
    <dbReference type="NCBI Taxonomy" id="39947"/>
    <lineage>
        <taxon>Eukaryota</taxon>
        <taxon>Viridiplantae</taxon>
        <taxon>Streptophyta</taxon>
        <taxon>Embryophyta</taxon>
        <taxon>Tracheophyta</taxon>
        <taxon>Spermatophyta</taxon>
        <taxon>Magnoliopsida</taxon>
        <taxon>Liliopsida</taxon>
        <taxon>Poales</taxon>
        <taxon>Poaceae</taxon>
        <taxon>BOP clade</taxon>
        <taxon>Oryzoideae</taxon>
        <taxon>Oryzeae</taxon>
        <taxon>Oryzinae</taxon>
        <taxon>Oryza</taxon>
        <taxon>Oryza sativa</taxon>
    </lineage>
</organism>
<dbReference type="EMBL" id="EF199630">
    <property type="protein sequence ID" value="ABM90394.1"/>
    <property type="molecule type" value="mRNA"/>
</dbReference>
<dbReference type="EMBL" id="EF199631">
    <property type="protein sequence ID" value="ABM90395.1"/>
    <property type="molecule type" value="mRNA"/>
</dbReference>
<dbReference type="EMBL" id="JQ001818">
    <property type="protein sequence ID" value="AFK74501.1"/>
    <property type="molecule type" value="mRNA"/>
</dbReference>
<dbReference type="EMBL" id="AP003794">
    <property type="protein sequence ID" value="BAB90559.1"/>
    <property type="molecule type" value="Genomic_DNA"/>
</dbReference>
<dbReference type="EMBL" id="AP003287">
    <property type="protein sequence ID" value="BAB91752.1"/>
    <property type="molecule type" value="Genomic_DNA"/>
</dbReference>
<dbReference type="EMBL" id="AP008207">
    <property type="protein sequence ID" value="BAF06780.1"/>
    <property type="status" value="ALT_INIT"/>
    <property type="molecule type" value="Genomic_DNA"/>
</dbReference>
<dbReference type="EMBL" id="AP014957">
    <property type="protein sequence ID" value="BAS75326.1"/>
    <property type="status" value="ALT_INIT"/>
    <property type="molecule type" value="Genomic_DNA"/>
</dbReference>
<dbReference type="EMBL" id="CM000138">
    <property type="protein sequence ID" value="EEE55706.1"/>
    <property type="status" value="ALT_INIT"/>
    <property type="molecule type" value="Genomic_DNA"/>
</dbReference>
<dbReference type="RefSeq" id="XP_015628684.1">
    <molecule id="Q8RZ35-1"/>
    <property type="nucleotide sequence ID" value="XM_015773198.1"/>
</dbReference>
<dbReference type="RefSeq" id="XP_015628691.1">
    <property type="nucleotide sequence ID" value="XM_015773205.1"/>
</dbReference>
<dbReference type="SMR" id="Q8RZ35"/>
<dbReference type="FunCoup" id="Q8RZ35">
    <property type="interactions" value="345"/>
</dbReference>
<dbReference type="STRING" id="39947.Q8RZ35"/>
<dbReference type="iPTMnet" id="Q8RZ35"/>
<dbReference type="PaxDb" id="39947-Q8RZ35"/>
<dbReference type="EnsemblPlants" id="Os01t0859300-01">
    <molecule id="Q8RZ35-1"/>
    <property type="protein sequence ID" value="Os01t0859300-01"/>
    <property type="gene ID" value="Os01g0859300"/>
</dbReference>
<dbReference type="GeneID" id="4325061"/>
<dbReference type="Gramene" id="Os01t0859300-01">
    <molecule id="Q8RZ35-1"/>
    <property type="protein sequence ID" value="Os01t0859300-01"/>
    <property type="gene ID" value="Os01g0859300"/>
</dbReference>
<dbReference type="KEGG" id="dosa:Os01g0859300"/>
<dbReference type="KEGG" id="osa:4325061"/>
<dbReference type="eggNOG" id="ENOG502QPJH">
    <property type="taxonomic scope" value="Eukaryota"/>
</dbReference>
<dbReference type="HOGENOM" id="CLU_043238_1_1_1"/>
<dbReference type="InParanoid" id="Q8RZ35"/>
<dbReference type="OrthoDB" id="644067at2759"/>
<dbReference type="Proteomes" id="UP000000763">
    <property type="component" value="Chromosome 1"/>
</dbReference>
<dbReference type="Proteomes" id="UP000007752">
    <property type="component" value="Chromosome 1"/>
</dbReference>
<dbReference type="Proteomes" id="UP000059680">
    <property type="component" value="Chromosome 1"/>
</dbReference>
<dbReference type="GO" id="GO:0005634">
    <property type="term" value="C:nucleus"/>
    <property type="evidence" value="ECO:0000314"/>
    <property type="project" value="UniProtKB"/>
</dbReference>
<dbReference type="GO" id="GO:0003700">
    <property type="term" value="F:DNA-binding transcription factor activity"/>
    <property type="evidence" value="ECO:0000314"/>
    <property type="project" value="UniProtKB"/>
</dbReference>
<dbReference type="GO" id="GO:0042803">
    <property type="term" value="F:protein homodimerization activity"/>
    <property type="evidence" value="ECO:0000314"/>
    <property type="project" value="UniProtKB"/>
</dbReference>
<dbReference type="GO" id="GO:0043565">
    <property type="term" value="F:sequence-specific DNA binding"/>
    <property type="evidence" value="ECO:0000314"/>
    <property type="project" value="UniProtKB"/>
</dbReference>
<dbReference type="GO" id="GO:0009738">
    <property type="term" value="P:abscisic acid-activated signaling pathway"/>
    <property type="evidence" value="ECO:0000314"/>
    <property type="project" value="UniProtKB"/>
</dbReference>
<dbReference type="GO" id="GO:0010152">
    <property type="term" value="P:pollen maturation"/>
    <property type="evidence" value="ECO:0000315"/>
    <property type="project" value="Gramene"/>
</dbReference>
<dbReference type="GO" id="GO:0045893">
    <property type="term" value="P:positive regulation of DNA-templated transcription"/>
    <property type="evidence" value="ECO:0007669"/>
    <property type="project" value="InterPro"/>
</dbReference>
<dbReference type="GO" id="GO:0006355">
    <property type="term" value="P:regulation of DNA-templated transcription"/>
    <property type="evidence" value="ECO:0000314"/>
    <property type="project" value="UniProtKB"/>
</dbReference>
<dbReference type="GO" id="GO:0009737">
    <property type="term" value="P:response to abscisic acid"/>
    <property type="evidence" value="ECO:0000315"/>
    <property type="project" value="Gramene"/>
</dbReference>
<dbReference type="GO" id="GO:0009409">
    <property type="term" value="P:response to cold"/>
    <property type="evidence" value="ECO:0000315"/>
    <property type="project" value="Gramene"/>
</dbReference>
<dbReference type="GO" id="GO:0009651">
    <property type="term" value="P:response to salt stress"/>
    <property type="evidence" value="ECO:0000315"/>
    <property type="project" value="Gramene"/>
</dbReference>
<dbReference type="GO" id="GO:0009414">
    <property type="term" value="P:response to water deprivation"/>
    <property type="evidence" value="ECO:0000315"/>
    <property type="project" value="Gramene"/>
</dbReference>
<dbReference type="GO" id="GO:0009845">
    <property type="term" value="P:seed germination"/>
    <property type="evidence" value="ECO:0000315"/>
    <property type="project" value="UniProtKB"/>
</dbReference>
<dbReference type="GO" id="GO:0090351">
    <property type="term" value="P:seedling development"/>
    <property type="evidence" value="ECO:0000315"/>
    <property type="project" value="UniProtKB"/>
</dbReference>
<dbReference type="CDD" id="cd14707">
    <property type="entry name" value="bZIP_plant_BZIP46"/>
    <property type="match status" value="1"/>
</dbReference>
<dbReference type="FunFam" id="1.20.5.170:FF:000060">
    <property type="entry name" value="protein ABSCISIC ACID-INSENSITIVE 5 isoform X1"/>
    <property type="match status" value="1"/>
</dbReference>
<dbReference type="Gene3D" id="1.20.5.170">
    <property type="match status" value="1"/>
</dbReference>
<dbReference type="InterPro" id="IPR004827">
    <property type="entry name" value="bZIP"/>
</dbReference>
<dbReference type="InterPro" id="IPR043452">
    <property type="entry name" value="BZIP46-like"/>
</dbReference>
<dbReference type="InterPro" id="IPR046347">
    <property type="entry name" value="bZIP_sf"/>
</dbReference>
<dbReference type="PANTHER" id="PTHR22952">
    <property type="entry name" value="CAMP-RESPONSE ELEMENT BINDING PROTEIN-RELATED"/>
    <property type="match status" value="1"/>
</dbReference>
<dbReference type="PANTHER" id="PTHR22952:SF175">
    <property type="entry name" value="PROTEIN ABSCISIC ACID-INSENSITIVE 5"/>
    <property type="match status" value="1"/>
</dbReference>
<dbReference type="Pfam" id="PF00170">
    <property type="entry name" value="bZIP_1"/>
    <property type="match status" value="1"/>
</dbReference>
<dbReference type="SMART" id="SM00338">
    <property type="entry name" value="BRLZ"/>
    <property type="match status" value="1"/>
</dbReference>
<dbReference type="SUPFAM" id="SSF57959">
    <property type="entry name" value="Leucine zipper domain"/>
    <property type="match status" value="1"/>
</dbReference>
<dbReference type="PROSITE" id="PS50217">
    <property type="entry name" value="BZIP"/>
    <property type="match status" value="1"/>
</dbReference>
<dbReference type="PROSITE" id="PS00036">
    <property type="entry name" value="BZIP_BASIC"/>
    <property type="match status" value="1"/>
</dbReference>
<accession>Q8RZ35</accession>
<accession>A2TGS0</accession>
<accession>B9EUT0</accession>
<accession>Q0JHJ8</accession>
<keyword id="KW-0938">Abscisic acid signaling pathway</keyword>
<keyword id="KW-0025">Alternative splicing</keyword>
<keyword id="KW-0238">DNA-binding</keyword>
<keyword id="KW-0539">Nucleus</keyword>
<keyword id="KW-0597">Phosphoprotein</keyword>
<keyword id="KW-1185">Reference proteome</keyword>
<keyword id="KW-0346">Stress response</keyword>
<keyword id="KW-0804">Transcription</keyword>
<keyword id="KW-0805">Transcription regulation</keyword>
<reference key="1">
    <citation type="journal article" date="2007" name="Biochem. Biophys. Res. Commun.">
        <title>Characterization of alternative splicing products of bZIP transcription factors OsABI5.</title>
        <authorList>
            <person name="Zou M."/>
            <person name="Guan Y."/>
            <person name="Ren H."/>
            <person name="Zhang F."/>
            <person name="Chen F."/>
        </authorList>
    </citation>
    <scope>NUCLEOTIDE SEQUENCE [MRNA] (ISOFORMS 1 AND 2)</scope>
    <scope>ALTERNATIVE SPLICING</scope>
    <scope>FUNCTION</scope>
    <scope>SUBUNIT</scope>
    <scope>HOMODIMERIZATION</scope>
    <scope>INTERACTION WITH VP1</scope>
    <scope>TISSUE SPECIFICITY</scope>
</reference>
<reference key="2">
    <citation type="journal article" date="2011" name="Phytochemistry">
        <title>Phosphorylation-mediated regulation of a rice ABA responsive element binding factor.</title>
        <authorList>
            <person name="Hong J.Y."/>
            <person name="Chae M.J."/>
            <person name="Lee I.S."/>
            <person name="Lee Y.N."/>
            <person name="Nam M.H."/>
            <person name="Kim D.Y."/>
            <person name="Byun M.O."/>
            <person name="Yoon I.S."/>
        </authorList>
    </citation>
    <scope>NUCLEOTIDE SEQUENCE [MRNA] (ISOFORM 1)</scope>
    <scope>FUNCTION</scope>
    <scope>INTERACTION WITH GF14D</scope>
    <scope>SUBCELLULAR LOCATION</scope>
    <scope>TISSUE SPECIFICITY</scope>
    <scope>INDUCTION BY ABSCISIC ACID</scope>
    <scope>PHOSPHORYLATION AT SER-44</scope>
    <scope>MUTAGENESIS OF SER-43; SER-44; SER-47; 72-PHE-VAL-73; 76-ILE-TRP-77; SER-118; SER-120 AND SER-385</scope>
</reference>
<reference key="3">
    <citation type="journal article" date="2002" name="Nature">
        <title>The genome sequence and structure of rice chromosome 1.</title>
        <authorList>
            <person name="Sasaki T."/>
            <person name="Matsumoto T."/>
            <person name="Yamamoto K."/>
            <person name="Sakata K."/>
            <person name="Baba T."/>
            <person name="Katayose Y."/>
            <person name="Wu J."/>
            <person name="Niimura Y."/>
            <person name="Cheng Z."/>
            <person name="Nagamura Y."/>
            <person name="Antonio B.A."/>
            <person name="Kanamori H."/>
            <person name="Hosokawa S."/>
            <person name="Masukawa M."/>
            <person name="Arikawa K."/>
            <person name="Chiden Y."/>
            <person name="Hayashi M."/>
            <person name="Okamoto M."/>
            <person name="Ando T."/>
            <person name="Aoki H."/>
            <person name="Arita K."/>
            <person name="Hamada M."/>
            <person name="Harada C."/>
            <person name="Hijishita S."/>
            <person name="Honda M."/>
            <person name="Ichikawa Y."/>
            <person name="Idonuma A."/>
            <person name="Iijima M."/>
            <person name="Ikeda M."/>
            <person name="Ikeno M."/>
            <person name="Ito S."/>
            <person name="Ito T."/>
            <person name="Ito Y."/>
            <person name="Ito Y."/>
            <person name="Iwabuchi A."/>
            <person name="Kamiya K."/>
            <person name="Karasawa W."/>
            <person name="Katagiri S."/>
            <person name="Kikuta A."/>
            <person name="Kobayashi N."/>
            <person name="Kono I."/>
            <person name="Machita K."/>
            <person name="Maehara T."/>
            <person name="Mizuno H."/>
            <person name="Mizubayashi T."/>
            <person name="Mukai Y."/>
            <person name="Nagasaki H."/>
            <person name="Nakashima M."/>
            <person name="Nakama Y."/>
            <person name="Nakamichi Y."/>
            <person name="Nakamura M."/>
            <person name="Namiki N."/>
            <person name="Negishi M."/>
            <person name="Ohta I."/>
            <person name="Ono N."/>
            <person name="Saji S."/>
            <person name="Sakai K."/>
            <person name="Shibata M."/>
            <person name="Shimokawa T."/>
            <person name="Shomura A."/>
            <person name="Song J."/>
            <person name="Takazaki Y."/>
            <person name="Terasawa K."/>
            <person name="Tsuji K."/>
            <person name="Waki K."/>
            <person name="Yamagata H."/>
            <person name="Yamane H."/>
            <person name="Yoshiki S."/>
            <person name="Yoshihara R."/>
            <person name="Yukawa K."/>
            <person name="Zhong H."/>
            <person name="Iwama H."/>
            <person name="Endo T."/>
            <person name="Ito H."/>
            <person name="Hahn J.H."/>
            <person name="Kim H.-I."/>
            <person name="Eun M.-Y."/>
            <person name="Yano M."/>
            <person name="Jiang J."/>
            <person name="Gojobori T."/>
        </authorList>
    </citation>
    <scope>NUCLEOTIDE SEQUENCE [LARGE SCALE GENOMIC DNA]</scope>
    <source>
        <strain>cv. Nipponbare</strain>
    </source>
</reference>
<reference key="4">
    <citation type="journal article" date="2005" name="Nature">
        <title>The map-based sequence of the rice genome.</title>
        <authorList>
            <consortium name="International rice genome sequencing project (IRGSP)"/>
        </authorList>
    </citation>
    <scope>NUCLEOTIDE SEQUENCE [LARGE SCALE GENOMIC DNA]</scope>
    <source>
        <strain>cv. Nipponbare</strain>
    </source>
</reference>
<reference key="5">
    <citation type="journal article" date="2008" name="Nucleic Acids Res.">
        <title>The rice annotation project database (RAP-DB): 2008 update.</title>
        <authorList>
            <consortium name="The rice annotation project (RAP)"/>
        </authorList>
    </citation>
    <scope>GENOME REANNOTATION</scope>
    <source>
        <strain>cv. Nipponbare</strain>
    </source>
</reference>
<reference key="6">
    <citation type="journal article" date="2013" name="Rice">
        <title>Improvement of the Oryza sativa Nipponbare reference genome using next generation sequence and optical map data.</title>
        <authorList>
            <person name="Kawahara Y."/>
            <person name="de la Bastide M."/>
            <person name="Hamilton J.P."/>
            <person name="Kanamori H."/>
            <person name="McCombie W.R."/>
            <person name="Ouyang S."/>
            <person name="Schwartz D.C."/>
            <person name="Tanaka T."/>
            <person name="Wu J."/>
            <person name="Zhou S."/>
            <person name="Childs K.L."/>
            <person name="Davidson R.M."/>
            <person name="Lin H."/>
            <person name="Quesada-Ocampo L."/>
            <person name="Vaillancourt B."/>
            <person name="Sakai H."/>
            <person name="Lee S.S."/>
            <person name="Kim J."/>
            <person name="Numa H."/>
            <person name="Itoh T."/>
            <person name="Buell C.R."/>
            <person name="Matsumoto T."/>
        </authorList>
    </citation>
    <scope>GENOME REANNOTATION</scope>
    <source>
        <strain>cv. Nipponbare</strain>
    </source>
</reference>
<reference key="7">
    <citation type="journal article" date="2005" name="PLoS Biol.">
        <title>The genomes of Oryza sativa: a history of duplications.</title>
        <authorList>
            <person name="Yu J."/>
            <person name="Wang J."/>
            <person name="Lin W."/>
            <person name="Li S."/>
            <person name="Li H."/>
            <person name="Zhou J."/>
            <person name="Ni P."/>
            <person name="Dong W."/>
            <person name="Hu S."/>
            <person name="Zeng C."/>
            <person name="Zhang J."/>
            <person name="Zhang Y."/>
            <person name="Li R."/>
            <person name="Xu Z."/>
            <person name="Li S."/>
            <person name="Li X."/>
            <person name="Zheng H."/>
            <person name="Cong L."/>
            <person name="Lin L."/>
            <person name="Yin J."/>
            <person name="Geng J."/>
            <person name="Li G."/>
            <person name="Shi J."/>
            <person name="Liu J."/>
            <person name="Lv H."/>
            <person name="Li J."/>
            <person name="Wang J."/>
            <person name="Deng Y."/>
            <person name="Ran L."/>
            <person name="Shi X."/>
            <person name="Wang X."/>
            <person name="Wu Q."/>
            <person name="Li C."/>
            <person name="Ren X."/>
            <person name="Wang J."/>
            <person name="Wang X."/>
            <person name="Li D."/>
            <person name="Liu D."/>
            <person name="Zhang X."/>
            <person name="Ji Z."/>
            <person name="Zhao W."/>
            <person name="Sun Y."/>
            <person name="Zhang Z."/>
            <person name="Bao J."/>
            <person name="Han Y."/>
            <person name="Dong L."/>
            <person name="Ji J."/>
            <person name="Chen P."/>
            <person name="Wu S."/>
            <person name="Liu J."/>
            <person name="Xiao Y."/>
            <person name="Bu D."/>
            <person name="Tan J."/>
            <person name="Yang L."/>
            <person name="Ye C."/>
            <person name="Zhang J."/>
            <person name="Xu J."/>
            <person name="Zhou Y."/>
            <person name="Yu Y."/>
            <person name="Zhang B."/>
            <person name="Zhuang S."/>
            <person name="Wei H."/>
            <person name="Liu B."/>
            <person name="Lei M."/>
            <person name="Yu H."/>
            <person name="Li Y."/>
            <person name="Xu H."/>
            <person name="Wei S."/>
            <person name="He X."/>
            <person name="Fang L."/>
            <person name="Zhang Z."/>
            <person name="Zhang Y."/>
            <person name="Huang X."/>
            <person name="Su Z."/>
            <person name="Tong W."/>
            <person name="Li J."/>
            <person name="Tong Z."/>
            <person name="Li S."/>
            <person name="Ye J."/>
            <person name="Wang L."/>
            <person name="Fang L."/>
            <person name="Lei T."/>
            <person name="Chen C.-S."/>
            <person name="Chen H.-C."/>
            <person name="Xu Z."/>
            <person name="Li H."/>
            <person name="Huang H."/>
            <person name="Zhang F."/>
            <person name="Xu H."/>
            <person name="Li N."/>
            <person name="Zhao C."/>
            <person name="Li S."/>
            <person name="Dong L."/>
            <person name="Huang Y."/>
            <person name="Li L."/>
            <person name="Xi Y."/>
            <person name="Qi Q."/>
            <person name="Li W."/>
            <person name="Zhang B."/>
            <person name="Hu W."/>
            <person name="Zhang Y."/>
            <person name="Tian X."/>
            <person name="Jiao Y."/>
            <person name="Liang X."/>
            <person name="Jin J."/>
            <person name="Gao L."/>
            <person name="Zheng W."/>
            <person name="Hao B."/>
            <person name="Liu S.-M."/>
            <person name="Wang W."/>
            <person name="Yuan L."/>
            <person name="Cao M."/>
            <person name="McDermott J."/>
            <person name="Samudrala R."/>
            <person name="Wang J."/>
            <person name="Wong G.K.-S."/>
            <person name="Yang H."/>
        </authorList>
    </citation>
    <scope>NUCLEOTIDE SEQUENCE [LARGE SCALE GENOMIC DNA]</scope>
    <source>
        <strain>cv. Nipponbare</strain>
    </source>
</reference>
<reference key="8">
    <citation type="journal article" date="2008" name="Plant Mol. Biol.">
        <title>A bZIP transcription factor, OsABI5, is involved in rice fertility and stress tolerance.</title>
        <authorList>
            <person name="Zou M."/>
            <person name="Guan Y."/>
            <person name="Ren H."/>
            <person name="Zhang F."/>
            <person name="Chen F."/>
        </authorList>
    </citation>
    <scope>FUNCTION</scope>
    <scope>SUBCELLULAR LOCATION</scope>
    <scope>INDUCTION</scope>
</reference>
<reference key="9">
    <citation type="journal article" date="2008" name="Plant Physiol.">
        <title>Genomic survey and gene expression analysis of the basic leucine zipper transcription factor family in rice.</title>
        <authorList>
            <person name="Nijhawan A."/>
            <person name="Jain M."/>
            <person name="Tyagi A.K."/>
            <person name="Khurana J.P."/>
        </authorList>
    </citation>
    <scope>GENE FAMILY</scope>
    <scope>NOMENCLATURE</scope>
</reference>
<reference key="10">
    <citation type="journal article" date="2012" name="J. Exp. Bot.">
        <title>A rice orthologue of the ABA receptor, OsPYL/RCAR5, is a positive regulator of the ABA signal transduction pathway in seed germination and early seedling growth.</title>
        <authorList>
            <person name="Kim H."/>
            <person name="Hwang H."/>
            <person name="Hong J.W."/>
            <person name="Lee Y.N."/>
            <person name="Ahn I.P."/>
            <person name="Yoon I.S."/>
            <person name="Yoo S.D."/>
            <person name="Lee S."/>
            <person name="Lee S.C."/>
            <person name="Kim B.G."/>
        </authorList>
    </citation>
    <scope>FUNCTION</scope>
    <scope>INTERACTION WITH SAPK2</scope>
    <scope>SUBCELLULAR LOCATION</scope>
    <scope>INDUCTION BY ABSCISIC ACID</scope>
</reference>
<reference key="11">
    <citation type="journal article" date="2017" name="Plant Mol. Biol.">
        <title>The protein phosphatase 2C clade A protein OsPP2C51 positively regulates seed germination by directly inactivating OsbZIP10.</title>
        <authorList>
            <person name="Bhatnagar N."/>
            <person name="Min M.K."/>
            <person name="Choi E.H."/>
            <person name="Kim N."/>
            <person name="Moon S.J."/>
            <person name="Yoon I."/>
            <person name="Kwon T."/>
            <person name="Jung K.H."/>
            <person name="Kim B.G."/>
        </authorList>
    </citation>
    <scope>INTERACTION WITH PP2C51 AND SAPK2</scope>
    <scope>SUBCELLULAR LOCATION</scope>
</reference>
<evidence type="ECO:0000255" key="1">
    <source>
        <dbReference type="PROSITE-ProRule" id="PRU00978"/>
    </source>
</evidence>
<evidence type="ECO:0000256" key="2">
    <source>
        <dbReference type="SAM" id="MobiDB-lite"/>
    </source>
</evidence>
<evidence type="ECO:0000269" key="3">
    <source>
    </source>
</evidence>
<evidence type="ECO:0000269" key="4">
    <source>
    </source>
</evidence>
<evidence type="ECO:0000269" key="5">
    <source>
    </source>
</evidence>
<evidence type="ECO:0000269" key="6">
    <source>
    </source>
</evidence>
<evidence type="ECO:0000269" key="7">
    <source>
    </source>
</evidence>
<evidence type="ECO:0000303" key="8">
    <source>
    </source>
</evidence>
<evidence type="ECO:0000303" key="9">
    <source>
    </source>
</evidence>
<evidence type="ECO:0000303" key="10">
    <source>
    </source>
</evidence>
<evidence type="ECO:0000305" key="11"/>
<evidence type="ECO:0000312" key="12">
    <source>
        <dbReference type="EMBL" id="BAB90559.1"/>
    </source>
</evidence>
<evidence type="ECO:0000312" key="13">
    <source>
        <dbReference type="EMBL" id="BAB91752.1"/>
    </source>
</evidence>
<evidence type="ECO:0000312" key="14">
    <source>
        <dbReference type="EMBL" id="BAS75326.1"/>
    </source>
</evidence>
<evidence type="ECO:0000312" key="15">
    <source>
        <dbReference type="EMBL" id="EEE55706.1"/>
    </source>
</evidence>
<feature type="chain" id="PRO_0000444338" description="bZIP transcription factor ABI5 homolog">
    <location>
        <begin position="1"/>
        <end position="388"/>
    </location>
</feature>
<feature type="domain" description="bZIP" evidence="1">
    <location>
        <begin position="302"/>
        <end position="365"/>
    </location>
</feature>
<feature type="region of interest" description="Disordered" evidence="2">
    <location>
        <begin position="1"/>
        <end position="36"/>
    </location>
</feature>
<feature type="region of interest" description="Basic motif" evidence="1">
    <location>
        <begin position="304"/>
        <end position="323"/>
    </location>
</feature>
<feature type="region of interest" description="Leucine-zipper" evidence="1">
    <location>
        <begin position="330"/>
        <end position="344"/>
    </location>
</feature>
<feature type="region of interest" description="Disordered" evidence="2">
    <location>
        <begin position="368"/>
        <end position="388"/>
    </location>
</feature>
<feature type="modified residue" description="Phosphoserine" evidence="5">
    <location>
        <position position="44"/>
    </location>
</feature>
<feature type="splice variant" id="VSP_059586" description="In isoform 2.">
    <location>
        <begin position="349"/>
        <end position="358"/>
    </location>
</feature>
<feature type="mutagenesis site" description="Reduces transactivation activity 4-fold; when associated with D-44 and D-47." evidence="5">
    <original>S</original>
    <variation>D</variation>
    <location>
        <position position="43"/>
    </location>
</feature>
<feature type="mutagenesis site" description="Loss of phosphorylation by SAPK6." evidence="5">
    <original>S</original>
    <variation>A</variation>
    <location>
        <position position="44"/>
    </location>
</feature>
<feature type="mutagenesis site" description="Reduces transactivation activity 4-fold; when associated with D-43 and D-47." evidence="5">
    <original>S</original>
    <variation>D</variation>
    <location>
        <position position="44"/>
    </location>
</feature>
<feature type="mutagenesis site" description="Reduces transactivation activity 4-fold; when associated with D-43 and D-44." evidence="5">
    <original>S</original>
    <variation>D</variation>
    <location>
        <position position="47"/>
    </location>
</feature>
<feature type="mutagenesis site" description="Loss of transactivation activity." evidence="5">
    <original>FV</original>
    <variation>SS</variation>
    <location>
        <begin position="72"/>
        <end position="73"/>
    </location>
</feature>
<feature type="mutagenesis site" description="Loss of transactivation activity." evidence="5">
    <original>IW</original>
    <variation>QS</variation>
    <location>
        <begin position="76"/>
        <end position="77"/>
    </location>
</feature>
<feature type="mutagenesis site" description="Loss of transactivation activity; when associated with A-120." evidence="5">
    <original>S</original>
    <variation>A</variation>
    <location>
        <position position="118"/>
    </location>
</feature>
<feature type="mutagenesis site" description="Loss of transactivation activity; when associated with A-118." evidence="5">
    <original>S</original>
    <variation>A</variation>
    <location>
        <position position="120"/>
    </location>
</feature>
<feature type="mutagenesis site" description="Disrupts the interaction with GF14D." evidence="5">
    <original>S</original>
    <variation>A</variation>
    <location>
        <position position="385"/>
    </location>
</feature>
<sequence length="388" mass="41480">MASEMSKNVKVTDDQEVTSQERDQSGGTKVGGEEEIAPLARQSSILSLTLEELQNSLCEPGRNFGSMNMDEFVANIWNAEEFQATTGGCKGAMEEAKVVDSGSGSGDAGGSGLCRQGSFSLPLPLCQKTVEEVWTEINQAPAHTSAPASALQPHAGSGGVAANDRQVTLGEMTLEDFLVKAGVVRGSFTGQAAMGSGMVNGPVNPMQQGQGGPMMFPVGPVNAMYPVMGDGMGYPGGYNGMAIVPPPPPAQGAMVVVSPGSSDGMSAMTHADMMNCIGNGMMIENGTRKRPHREDGCAEKTVERRQRRMIKNRESAARSRARKQAYTVELEAELNYLKQENARLKEAEKTVLLTKKQMLVEKMMEQSKEKMNANRGGSQLRRSGSCMW</sequence>